<reference key="1">
    <citation type="journal article" date="1996" name="Science">
        <title>Complete genome sequence of the methanogenic archaeon, Methanococcus jannaschii.</title>
        <authorList>
            <person name="Bult C.J."/>
            <person name="White O."/>
            <person name="Olsen G.J."/>
            <person name="Zhou L."/>
            <person name="Fleischmann R.D."/>
            <person name="Sutton G.G."/>
            <person name="Blake J.A."/>
            <person name="FitzGerald L.M."/>
            <person name="Clayton R.A."/>
            <person name="Gocayne J.D."/>
            <person name="Kerlavage A.R."/>
            <person name="Dougherty B.A."/>
            <person name="Tomb J.-F."/>
            <person name="Adams M.D."/>
            <person name="Reich C.I."/>
            <person name="Overbeek R."/>
            <person name="Kirkness E.F."/>
            <person name="Weinstock K.G."/>
            <person name="Merrick J.M."/>
            <person name="Glodek A."/>
            <person name="Scott J.L."/>
            <person name="Geoghagen N.S.M."/>
            <person name="Weidman J.F."/>
            <person name="Fuhrmann J.L."/>
            <person name="Nguyen D."/>
            <person name="Utterback T.R."/>
            <person name="Kelley J.M."/>
            <person name="Peterson J.D."/>
            <person name="Sadow P.W."/>
            <person name="Hanna M.C."/>
            <person name="Cotton M.D."/>
            <person name="Roberts K.M."/>
            <person name="Hurst M.A."/>
            <person name="Kaine B.P."/>
            <person name="Borodovsky M."/>
            <person name="Klenk H.-P."/>
            <person name="Fraser C.M."/>
            <person name="Smith H.O."/>
            <person name="Woese C.R."/>
            <person name="Venter J.C."/>
        </authorList>
    </citation>
    <scope>NUCLEOTIDE SEQUENCE [LARGE SCALE GENOMIC DNA]</scope>
    <source>
        <strain>ATCC 43067 / DSM 2661 / JAL-1 / JCM 10045 / NBRC 100440</strain>
    </source>
</reference>
<keyword id="KW-1185">Reference proteome</keyword>
<comment type="similarity">
    <text evidence="1">To M.jannaschii MJ0992.</text>
</comment>
<gene>
    <name type="ordered locus">MJ0628</name>
</gene>
<organism>
    <name type="scientific">Methanocaldococcus jannaschii (strain ATCC 43067 / DSM 2661 / JAL-1 / JCM 10045 / NBRC 100440)</name>
    <name type="common">Methanococcus jannaschii</name>
    <dbReference type="NCBI Taxonomy" id="243232"/>
    <lineage>
        <taxon>Archaea</taxon>
        <taxon>Methanobacteriati</taxon>
        <taxon>Methanobacteriota</taxon>
        <taxon>Methanomada group</taxon>
        <taxon>Methanococci</taxon>
        <taxon>Methanococcales</taxon>
        <taxon>Methanocaldococcaceae</taxon>
        <taxon>Methanocaldococcus</taxon>
    </lineage>
</organism>
<name>Y628_METJA</name>
<proteinExistence type="predicted"/>
<sequence length="166" mass="19743">MGQMFNPLDFVYIAEFLEESKVDKKEAKNRTIIGRYYYASFLFLRGILKENLKNYNSKEAKEFLYLIELSNSHKIILDFLNVLKKEDGKFRRVYNALSILRDLRNASDYELESPARVKSIKEMVDFNDDYYVELSKNKYKIIVNSKSDVENILKDRSKIDKILRKI</sequence>
<accession>Q58045</accession>
<evidence type="ECO:0000305" key="1"/>
<protein>
    <recommendedName>
        <fullName>Uncharacterized protein MJ0628</fullName>
    </recommendedName>
</protein>
<feature type="chain" id="PRO_0000106962" description="Uncharacterized protein MJ0628">
    <location>
        <begin position="1"/>
        <end position="166"/>
    </location>
</feature>
<dbReference type="EMBL" id="L77117">
    <property type="protein sequence ID" value="AAB98627.1"/>
    <property type="molecule type" value="Genomic_DNA"/>
</dbReference>
<dbReference type="PIR" id="D64378">
    <property type="entry name" value="D64378"/>
</dbReference>
<dbReference type="SMR" id="Q58045"/>
<dbReference type="FunCoup" id="Q58045">
    <property type="interactions" value="2"/>
</dbReference>
<dbReference type="STRING" id="243232.MJ_0628"/>
<dbReference type="PaxDb" id="243232-MJ_0628"/>
<dbReference type="DNASU" id="1451494"/>
<dbReference type="EnsemblBacteria" id="AAB98627">
    <property type="protein sequence ID" value="AAB98627"/>
    <property type="gene ID" value="MJ_0628"/>
</dbReference>
<dbReference type="KEGG" id="mja:MJ_0628"/>
<dbReference type="eggNOG" id="arCOG06576">
    <property type="taxonomic scope" value="Archaea"/>
</dbReference>
<dbReference type="HOGENOM" id="CLU_114816_0_0_2"/>
<dbReference type="InParanoid" id="Q58045"/>
<dbReference type="OrthoDB" id="100632at2157"/>
<dbReference type="Proteomes" id="UP000000805">
    <property type="component" value="Chromosome"/>
</dbReference>
<dbReference type="Gene3D" id="1.20.120.330">
    <property type="entry name" value="Nucleotidyltransferases domain 2"/>
    <property type="match status" value="1"/>
</dbReference>